<protein>
    <recommendedName>
        <fullName>Apolipoprotein C-IV</fullName>
        <shortName>Apo-CIV</shortName>
        <shortName>ApoC-IV</shortName>
    </recommendedName>
    <alternativeName>
        <fullName>Apolipoprotein C4</fullName>
    </alternativeName>
</protein>
<name>APOC4_ATEGE</name>
<accession>P0DKW2</accession>
<proteinExistence type="inferred from homology"/>
<keyword id="KW-0445">Lipid transport</keyword>
<keyword id="KW-0964">Secreted</keyword>
<keyword id="KW-0732">Signal</keyword>
<keyword id="KW-0813">Transport</keyword>
<sequence length="125" mass="14534">MSLLRHSLQALPALCLCVLVLACIGACQSEAHEGTPSPPPEQKTRRWNLVQSRMKELLEPAVTRTRDRWQWLWNLSILRGFIQTYYDDHLRDLGPRTKTWLLESKDTLLNKTYSLCPRLLCTDKN</sequence>
<reference key="1">
    <citation type="submission" date="2006-07" db="EMBL/GenBank/DDBJ databases">
        <authorList>
            <person name="Cheng J.-F."/>
            <person name="Hamilton M."/>
            <person name="Peng Y."/>
            <person name="Hosseini R."/>
            <person name="Peng Z."/>
            <person name="Malinov I."/>
            <person name="Rubin E.M."/>
        </authorList>
    </citation>
    <scope>NUCLEOTIDE SEQUENCE [LARGE SCALE GENOMIC DNA]</scope>
</reference>
<reference key="2">
    <citation type="unpublished observations" date="2012-11">
        <authorList>
            <person name="Puppione D.L."/>
        </authorList>
    </citation>
    <scope>IDENTIFICATION</scope>
</reference>
<dbReference type="EMBL" id="AC188244">
    <property type="status" value="NOT_ANNOTATED_CDS"/>
    <property type="molecule type" value="Genomic_DNA"/>
</dbReference>
<dbReference type="OrthoDB" id="9449255at2759"/>
<dbReference type="GO" id="GO:0034364">
    <property type="term" value="C:high-density lipoprotein particle"/>
    <property type="evidence" value="ECO:0007669"/>
    <property type="project" value="TreeGrafter"/>
</dbReference>
<dbReference type="GO" id="GO:0034361">
    <property type="term" value="C:very-low-density lipoprotein particle"/>
    <property type="evidence" value="ECO:0007669"/>
    <property type="project" value="TreeGrafter"/>
</dbReference>
<dbReference type="GO" id="GO:0006869">
    <property type="term" value="P:lipid transport"/>
    <property type="evidence" value="ECO:0007669"/>
    <property type="project" value="UniProtKB-KW"/>
</dbReference>
<dbReference type="GO" id="GO:0010890">
    <property type="term" value="P:positive regulation of triglyceride storage"/>
    <property type="evidence" value="ECO:0007669"/>
    <property type="project" value="TreeGrafter"/>
</dbReference>
<dbReference type="GO" id="GO:0070328">
    <property type="term" value="P:triglyceride homeostasis"/>
    <property type="evidence" value="ECO:0007669"/>
    <property type="project" value="TreeGrafter"/>
</dbReference>
<dbReference type="InterPro" id="IPR028120">
    <property type="entry name" value="APOC4"/>
</dbReference>
<dbReference type="PANTHER" id="PTHR32288">
    <property type="entry name" value="APOLIPOPROTEIN C-IV"/>
    <property type="match status" value="1"/>
</dbReference>
<dbReference type="PANTHER" id="PTHR32288:SF0">
    <property type="entry name" value="APOLIPOPROTEIN C-IV"/>
    <property type="match status" value="1"/>
</dbReference>
<dbReference type="Pfam" id="PF15119">
    <property type="entry name" value="APOC4"/>
    <property type="match status" value="1"/>
</dbReference>
<feature type="signal peptide" evidence="2">
    <location>
        <begin position="1"/>
        <end position="27"/>
    </location>
</feature>
<feature type="chain" id="PRO_0000420989" description="Apolipoprotein C-IV">
    <location>
        <begin position="28"/>
        <end position="125"/>
    </location>
</feature>
<evidence type="ECO:0000250" key="1"/>
<evidence type="ECO:0000250" key="2">
    <source>
        <dbReference type="UniProtKB" id="P55057"/>
    </source>
</evidence>
<evidence type="ECO:0000305" key="3"/>
<comment type="function">
    <text evidence="1">May participate in lipoprotein metabolism.</text>
</comment>
<comment type="subcellular location">
    <subcellularLocation>
        <location evidence="1">Secreted</location>
    </subcellularLocation>
</comment>
<comment type="similarity">
    <text evidence="3">Belongs to the apolipoprotein C4 family.</text>
</comment>
<gene>
    <name type="primary">APOC4</name>
</gene>
<organism>
    <name type="scientific">Ateles geoffroyi</name>
    <name type="common">Black-handed spider monkey</name>
    <name type="synonym">Geoffroy's spider monkey</name>
    <dbReference type="NCBI Taxonomy" id="9509"/>
    <lineage>
        <taxon>Eukaryota</taxon>
        <taxon>Metazoa</taxon>
        <taxon>Chordata</taxon>
        <taxon>Craniata</taxon>
        <taxon>Vertebrata</taxon>
        <taxon>Euteleostomi</taxon>
        <taxon>Mammalia</taxon>
        <taxon>Eutheria</taxon>
        <taxon>Euarchontoglires</taxon>
        <taxon>Primates</taxon>
        <taxon>Haplorrhini</taxon>
        <taxon>Platyrrhini</taxon>
        <taxon>Atelidae</taxon>
        <taxon>Atelinae</taxon>
        <taxon>Ateles</taxon>
    </lineage>
</organism>